<geneLocation type="cyanelle"/>
<sequence>MCICVNCDLLVFCSLYQTIEILHKESLSFELDQIVEFEPRKSNIIVNINSSENSIKHEWDVISCESFVLNLSKYNVS</sequence>
<keyword id="KW-0194">Cyanelle</keyword>
<keyword id="KW-0934">Plastid</keyword>
<proteinExistence type="predicted"/>
<gene>
    <name type="primary">ycf34</name>
</gene>
<accession>P48274</accession>
<feature type="chain" id="PRO_0000217345" description="Uncharacterized protein ycf34">
    <location>
        <begin position="1"/>
        <end position="77"/>
    </location>
</feature>
<dbReference type="EMBL" id="U30821">
    <property type="protein sequence ID" value="AAA81176.1"/>
    <property type="molecule type" value="Genomic_DNA"/>
</dbReference>
<dbReference type="PIR" id="T06833">
    <property type="entry name" value="T06833"/>
</dbReference>
<dbReference type="RefSeq" id="NP_043145.1">
    <property type="nucleotide sequence ID" value="NC_001675.1"/>
</dbReference>
<dbReference type="GeneID" id="801648"/>
<dbReference type="GO" id="GO:0009842">
    <property type="term" value="C:cyanelle"/>
    <property type="evidence" value="ECO:0007669"/>
    <property type="project" value="UniProtKB-SubCell"/>
</dbReference>
<dbReference type="InterPro" id="IPR019656">
    <property type="entry name" value="Uncharacterised_Ycf34"/>
</dbReference>
<dbReference type="Pfam" id="PF10718">
    <property type="entry name" value="Ycf34"/>
    <property type="match status" value="1"/>
</dbReference>
<reference key="1">
    <citation type="journal article" date="1995" name="Plant Mol. Biol. Rep.">
        <title>Nucleotide sequence of the cyanelle DNA from Cyanophora paradoxa.</title>
        <authorList>
            <person name="Stirewalt V.L."/>
            <person name="Michalowski C.B."/>
            <person name="Loeffelhardt W."/>
            <person name="Bohnert H.J."/>
            <person name="Bryant D.A."/>
        </authorList>
    </citation>
    <scope>NUCLEOTIDE SEQUENCE [LARGE SCALE GENOMIC DNA]</scope>
    <source>
        <strain>UTEX LB 555 / Pringsheim</strain>
    </source>
</reference>
<reference key="2">
    <citation type="book" date="1997" name="Eukaryotism and symbiosis">
        <title>The complete sequence of the cyanelle genome of Cyanophora paradoxa: the genetic complexity of a primitive plastid.</title>
        <editorList>
            <person name="Schenk H.E.A."/>
            <person name="Herrmann R."/>
            <person name="Jeon K.W."/>
            <person name="Mueller N.E."/>
            <person name="Schwemmler W."/>
        </editorList>
        <authorList>
            <person name="Loeffelhardt W."/>
            <person name="Stirewalt V.L."/>
            <person name="Michalowski C.B."/>
            <person name="Annarella M."/>
            <person name="Farley J.Y."/>
            <person name="Schluchter W.M."/>
            <person name="Chung S."/>
            <person name="Newmann-Spallart C."/>
            <person name="Steiner J.M."/>
            <person name="Jakowitsch J."/>
            <person name="Bohnert H.J."/>
            <person name="Bryant D.A."/>
        </authorList>
    </citation>
    <scope>NUCLEOTIDE SEQUENCE [LARGE SCALE GENOMIC DNA]</scope>
    <source>
        <strain>UTEX LB 555 / Pringsheim</strain>
    </source>
</reference>
<protein>
    <recommendedName>
        <fullName>Uncharacterized protein ycf34</fullName>
    </recommendedName>
</protein>
<name>YCF34_CYAPA</name>
<comment type="subcellular location">
    <subcellularLocation>
        <location>Plastid</location>
        <location>Cyanelle</location>
    </subcellularLocation>
</comment>
<organism>
    <name type="scientific">Cyanophora paradoxa</name>
    <dbReference type="NCBI Taxonomy" id="2762"/>
    <lineage>
        <taxon>Eukaryota</taxon>
        <taxon>Glaucocystophyceae</taxon>
        <taxon>Cyanophoraceae</taxon>
        <taxon>Cyanophora</taxon>
    </lineage>
</organism>